<comment type="function">
    <text evidence="1">Binds directly to 23S ribosomal RNA and is necessary for the in vitro assembly process of the 50S ribosomal subunit. It is not involved in the protein synthesizing functions of that subunit.</text>
</comment>
<comment type="similarity">
    <text evidence="1">Belongs to the bacterial ribosomal protein bL20 family.</text>
</comment>
<proteinExistence type="inferred from homology"/>
<reference key="1">
    <citation type="journal article" date="2010" name="PLoS ONE">
        <title>The complete genome sequence of Cupriavidus metallidurans strain CH34, a master survivalist in harsh and anthropogenic environments.</title>
        <authorList>
            <person name="Janssen P.J."/>
            <person name="Van Houdt R."/>
            <person name="Moors H."/>
            <person name="Monsieurs P."/>
            <person name="Morin N."/>
            <person name="Michaux A."/>
            <person name="Benotmane M.A."/>
            <person name="Leys N."/>
            <person name="Vallaeys T."/>
            <person name="Lapidus A."/>
            <person name="Monchy S."/>
            <person name="Medigue C."/>
            <person name="Taghavi S."/>
            <person name="McCorkle S."/>
            <person name="Dunn J."/>
            <person name="van der Lelie D."/>
            <person name="Mergeay M."/>
        </authorList>
    </citation>
    <scope>NUCLEOTIDE SEQUENCE [LARGE SCALE GENOMIC DNA]</scope>
    <source>
        <strain>ATCC 43123 / DSM 2839 / NBRC 102507 / CH34</strain>
    </source>
</reference>
<keyword id="KW-1185">Reference proteome</keyword>
<keyword id="KW-0687">Ribonucleoprotein</keyword>
<keyword id="KW-0689">Ribosomal protein</keyword>
<keyword id="KW-0694">RNA-binding</keyword>
<keyword id="KW-0699">rRNA-binding</keyword>
<protein>
    <recommendedName>
        <fullName evidence="1">Large ribosomal subunit protein bL20</fullName>
    </recommendedName>
    <alternativeName>
        <fullName evidence="2">50S ribosomal protein L20</fullName>
    </alternativeName>
</protein>
<gene>
    <name evidence="1" type="primary">rplT</name>
    <name type="ordered locus">Rmet_1163</name>
</gene>
<sequence>MPRVKRGVTARARHKKVIDAAKGYRGRRNNVYRIAKQAVMRAGQYAYRDRRNKKRVFRALWIARINAATREHGMTYSVFMNGLKKASIELDRKVLSDMAIHDKPAFAAIVNQVKATVA</sequence>
<name>RL20_CUPMC</name>
<accession>Q1LP77</accession>
<evidence type="ECO:0000255" key="1">
    <source>
        <dbReference type="HAMAP-Rule" id="MF_00382"/>
    </source>
</evidence>
<evidence type="ECO:0000305" key="2"/>
<organism>
    <name type="scientific">Cupriavidus metallidurans (strain ATCC 43123 / DSM 2839 / NBRC 102507 / CH34)</name>
    <name type="common">Ralstonia metallidurans</name>
    <dbReference type="NCBI Taxonomy" id="266264"/>
    <lineage>
        <taxon>Bacteria</taxon>
        <taxon>Pseudomonadati</taxon>
        <taxon>Pseudomonadota</taxon>
        <taxon>Betaproteobacteria</taxon>
        <taxon>Burkholderiales</taxon>
        <taxon>Burkholderiaceae</taxon>
        <taxon>Cupriavidus</taxon>
    </lineage>
</organism>
<dbReference type="EMBL" id="CP000352">
    <property type="protein sequence ID" value="ABF08049.1"/>
    <property type="molecule type" value="Genomic_DNA"/>
</dbReference>
<dbReference type="RefSeq" id="WP_008650487.1">
    <property type="nucleotide sequence ID" value="NC_007973.1"/>
</dbReference>
<dbReference type="SMR" id="Q1LP77"/>
<dbReference type="STRING" id="266264.Rmet_1163"/>
<dbReference type="GeneID" id="92820071"/>
<dbReference type="KEGG" id="rme:Rmet_1163"/>
<dbReference type="eggNOG" id="COG0292">
    <property type="taxonomic scope" value="Bacteria"/>
</dbReference>
<dbReference type="HOGENOM" id="CLU_123265_0_1_4"/>
<dbReference type="Proteomes" id="UP000002429">
    <property type="component" value="Chromosome"/>
</dbReference>
<dbReference type="GO" id="GO:1990904">
    <property type="term" value="C:ribonucleoprotein complex"/>
    <property type="evidence" value="ECO:0007669"/>
    <property type="project" value="UniProtKB-KW"/>
</dbReference>
<dbReference type="GO" id="GO:0005840">
    <property type="term" value="C:ribosome"/>
    <property type="evidence" value="ECO:0007669"/>
    <property type="project" value="UniProtKB-KW"/>
</dbReference>
<dbReference type="GO" id="GO:0019843">
    <property type="term" value="F:rRNA binding"/>
    <property type="evidence" value="ECO:0007669"/>
    <property type="project" value="UniProtKB-UniRule"/>
</dbReference>
<dbReference type="GO" id="GO:0003735">
    <property type="term" value="F:structural constituent of ribosome"/>
    <property type="evidence" value="ECO:0007669"/>
    <property type="project" value="InterPro"/>
</dbReference>
<dbReference type="GO" id="GO:0000027">
    <property type="term" value="P:ribosomal large subunit assembly"/>
    <property type="evidence" value="ECO:0007669"/>
    <property type="project" value="UniProtKB-UniRule"/>
</dbReference>
<dbReference type="GO" id="GO:0006412">
    <property type="term" value="P:translation"/>
    <property type="evidence" value="ECO:0007669"/>
    <property type="project" value="InterPro"/>
</dbReference>
<dbReference type="CDD" id="cd07026">
    <property type="entry name" value="Ribosomal_L20"/>
    <property type="match status" value="1"/>
</dbReference>
<dbReference type="FunFam" id="1.10.1900.20:FF:000001">
    <property type="entry name" value="50S ribosomal protein L20"/>
    <property type="match status" value="1"/>
</dbReference>
<dbReference type="Gene3D" id="6.10.160.10">
    <property type="match status" value="1"/>
</dbReference>
<dbReference type="Gene3D" id="1.10.1900.20">
    <property type="entry name" value="Ribosomal protein L20"/>
    <property type="match status" value="1"/>
</dbReference>
<dbReference type="HAMAP" id="MF_00382">
    <property type="entry name" value="Ribosomal_bL20"/>
    <property type="match status" value="1"/>
</dbReference>
<dbReference type="InterPro" id="IPR005813">
    <property type="entry name" value="Ribosomal_bL20"/>
</dbReference>
<dbReference type="InterPro" id="IPR049946">
    <property type="entry name" value="RIBOSOMAL_L20_CS"/>
</dbReference>
<dbReference type="InterPro" id="IPR035566">
    <property type="entry name" value="Ribosomal_protein_bL20_C"/>
</dbReference>
<dbReference type="NCBIfam" id="TIGR01032">
    <property type="entry name" value="rplT_bact"/>
    <property type="match status" value="1"/>
</dbReference>
<dbReference type="PANTHER" id="PTHR10986">
    <property type="entry name" value="39S RIBOSOMAL PROTEIN L20"/>
    <property type="match status" value="1"/>
</dbReference>
<dbReference type="Pfam" id="PF00453">
    <property type="entry name" value="Ribosomal_L20"/>
    <property type="match status" value="1"/>
</dbReference>
<dbReference type="PRINTS" id="PR00062">
    <property type="entry name" value="RIBOSOMALL20"/>
</dbReference>
<dbReference type="SUPFAM" id="SSF74731">
    <property type="entry name" value="Ribosomal protein L20"/>
    <property type="match status" value="1"/>
</dbReference>
<dbReference type="PROSITE" id="PS00937">
    <property type="entry name" value="RIBOSOMAL_L20"/>
    <property type="match status" value="1"/>
</dbReference>
<feature type="chain" id="PRO_1000049047" description="Large ribosomal subunit protein bL20">
    <location>
        <begin position="1"/>
        <end position="118"/>
    </location>
</feature>